<protein>
    <recommendedName>
        <fullName evidence="1">Proline--tRNA ligase</fullName>
        <ecNumber evidence="1">6.1.1.15</ecNumber>
    </recommendedName>
    <alternativeName>
        <fullName evidence="1">Prolyl-tRNA synthetase</fullName>
        <shortName evidence="1">ProRS</shortName>
    </alternativeName>
</protein>
<evidence type="ECO:0000255" key="1">
    <source>
        <dbReference type="HAMAP-Rule" id="MF_01571"/>
    </source>
</evidence>
<sequence length="480" mass="56099">MVERKRWSEEFSEWFNEVIEEAGILDKRYPVKGMNVWLPYGLKIMRNIEKFIHEEMERTGHQEVLFPALIPETEFKKEAEHIAGFEGEVFWVTHAGHEPLDVRLVLRPTSETAMYSMFALWIRSHADLPFKVYQIVNVYRYETKHTRPLIRVREISRFFEAHTAHADFEDAERQIKEDLEIFDNLMRKLALAYIISKRPEWDKFPGAFYSLGAEVVMPDGRTLQIGTMHNYKQNFSKAYNILYEKEDGTHDYVHQTTFGMSERLLAAVIAIHGDDRGMVLPPTIAPIQVVIVPIPKKGSEEEVYSYAKGIEEELRDAGIRVYLDLRDKRPGWKFYDWELKGVPVRVEVGPIDVQNSTVVLARRDKLEKITVKREELVDKVRELFEDIMEFLYERANEWLESHIKRVDTLEEAKAVFEDRRGIVEIPWCGEESCGLKMEEELEAKMLGIPYPEEKAKAPEGSKCPVCGREAKFIARFARTY</sequence>
<reference key="1">
    <citation type="journal article" date="1998" name="DNA Res.">
        <title>Complete sequence and gene organization of the genome of a hyper-thermophilic archaebacterium, Pyrococcus horikoshii OT3.</title>
        <authorList>
            <person name="Kawarabayasi Y."/>
            <person name="Sawada M."/>
            <person name="Horikawa H."/>
            <person name="Haikawa Y."/>
            <person name="Hino Y."/>
            <person name="Yamamoto S."/>
            <person name="Sekine M."/>
            <person name="Baba S."/>
            <person name="Kosugi H."/>
            <person name="Hosoyama A."/>
            <person name="Nagai Y."/>
            <person name="Sakai M."/>
            <person name="Ogura K."/>
            <person name="Otsuka R."/>
            <person name="Nakazawa H."/>
            <person name="Takamiya M."/>
            <person name="Ohfuku Y."/>
            <person name="Funahashi T."/>
            <person name="Tanaka T."/>
            <person name="Kudoh Y."/>
            <person name="Yamazaki J."/>
            <person name="Kushida N."/>
            <person name="Oguchi A."/>
            <person name="Aoki K."/>
            <person name="Yoshizawa T."/>
            <person name="Nakamura Y."/>
            <person name="Robb F.T."/>
            <person name="Horikoshi K."/>
            <person name="Masuchi Y."/>
            <person name="Shizuya H."/>
            <person name="Kikuchi H."/>
        </authorList>
    </citation>
    <scope>NUCLEOTIDE SEQUENCE [LARGE SCALE GENOMIC DNA]</scope>
    <source>
        <strain>ATCC 700860 / DSM 12428 / JCM 9974 / NBRC 100139 / OT-3</strain>
    </source>
</reference>
<proteinExistence type="inferred from homology"/>
<name>SYP_PYRHO</name>
<comment type="function">
    <text evidence="1">Catalyzes the attachment of proline to tRNA(Pro) in a two-step reaction: proline is first activated by ATP to form Pro-AMP and then transferred to the acceptor end of tRNA(Pro).</text>
</comment>
<comment type="catalytic activity">
    <reaction evidence="1">
        <text>tRNA(Pro) + L-proline + ATP = L-prolyl-tRNA(Pro) + AMP + diphosphate</text>
        <dbReference type="Rhea" id="RHEA:14305"/>
        <dbReference type="Rhea" id="RHEA-COMP:9700"/>
        <dbReference type="Rhea" id="RHEA-COMP:9702"/>
        <dbReference type="ChEBI" id="CHEBI:30616"/>
        <dbReference type="ChEBI" id="CHEBI:33019"/>
        <dbReference type="ChEBI" id="CHEBI:60039"/>
        <dbReference type="ChEBI" id="CHEBI:78442"/>
        <dbReference type="ChEBI" id="CHEBI:78532"/>
        <dbReference type="ChEBI" id="CHEBI:456215"/>
        <dbReference type="EC" id="6.1.1.15"/>
    </reaction>
</comment>
<comment type="subunit">
    <text evidence="1">Homodimer.</text>
</comment>
<comment type="subcellular location">
    <subcellularLocation>
        <location evidence="1">Cytoplasm</location>
    </subcellularLocation>
</comment>
<comment type="domain">
    <text evidence="1">Consists of three domains: the N-terminal catalytic domain, the anticodon-binding domain and the C-terminal extension.</text>
</comment>
<comment type="similarity">
    <text evidence="1">Belongs to the class-II aminoacyl-tRNA synthetase family. ProS type 3 subfamily.</text>
</comment>
<gene>
    <name evidence="1" type="primary">proS</name>
    <name type="ordered locus">PH1006</name>
</gene>
<accession>O58734</accession>
<keyword id="KW-0030">Aminoacyl-tRNA synthetase</keyword>
<keyword id="KW-0067">ATP-binding</keyword>
<keyword id="KW-0963">Cytoplasm</keyword>
<keyword id="KW-0436">Ligase</keyword>
<keyword id="KW-0547">Nucleotide-binding</keyword>
<keyword id="KW-0648">Protein biosynthesis</keyword>
<organism>
    <name type="scientific">Pyrococcus horikoshii (strain ATCC 700860 / DSM 12428 / JCM 9974 / NBRC 100139 / OT-3)</name>
    <dbReference type="NCBI Taxonomy" id="70601"/>
    <lineage>
        <taxon>Archaea</taxon>
        <taxon>Methanobacteriati</taxon>
        <taxon>Methanobacteriota</taxon>
        <taxon>Thermococci</taxon>
        <taxon>Thermococcales</taxon>
        <taxon>Thermococcaceae</taxon>
        <taxon>Pyrococcus</taxon>
    </lineage>
</organism>
<dbReference type="EC" id="6.1.1.15" evidence="1"/>
<dbReference type="EMBL" id="BA000001">
    <property type="protein sequence ID" value="BAA30103.1"/>
    <property type="molecule type" value="Genomic_DNA"/>
</dbReference>
<dbReference type="PIR" id="A71093">
    <property type="entry name" value="A71093"/>
</dbReference>
<dbReference type="RefSeq" id="WP_010885093.1">
    <property type="nucleotide sequence ID" value="NC_000961.1"/>
</dbReference>
<dbReference type="SMR" id="O58734"/>
<dbReference type="STRING" id="70601.gene:9377963"/>
<dbReference type="EnsemblBacteria" id="BAA30103">
    <property type="protein sequence ID" value="BAA30103"/>
    <property type="gene ID" value="BAA30103"/>
</dbReference>
<dbReference type="GeneID" id="1443328"/>
<dbReference type="KEGG" id="pho:PH1006"/>
<dbReference type="eggNOG" id="arCOG00402">
    <property type="taxonomic scope" value="Archaea"/>
</dbReference>
<dbReference type="OrthoDB" id="7375at2157"/>
<dbReference type="Proteomes" id="UP000000752">
    <property type="component" value="Chromosome"/>
</dbReference>
<dbReference type="GO" id="GO:0017101">
    <property type="term" value="C:aminoacyl-tRNA synthetase multienzyme complex"/>
    <property type="evidence" value="ECO:0007669"/>
    <property type="project" value="TreeGrafter"/>
</dbReference>
<dbReference type="GO" id="GO:0005737">
    <property type="term" value="C:cytoplasm"/>
    <property type="evidence" value="ECO:0007669"/>
    <property type="project" value="UniProtKB-SubCell"/>
</dbReference>
<dbReference type="GO" id="GO:0005524">
    <property type="term" value="F:ATP binding"/>
    <property type="evidence" value="ECO:0007669"/>
    <property type="project" value="UniProtKB-UniRule"/>
</dbReference>
<dbReference type="GO" id="GO:0004827">
    <property type="term" value="F:proline-tRNA ligase activity"/>
    <property type="evidence" value="ECO:0007669"/>
    <property type="project" value="UniProtKB-UniRule"/>
</dbReference>
<dbReference type="GO" id="GO:0006433">
    <property type="term" value="P:prolyl-tRNA aminoacylation"/>
    <property type="evidence" value="ECO:0007669"/>
    <property type="project" value="UniProtKB-UniRule"/>
</dbReference>
<dbReference type="CDD" id="cd00862">
    <property type="entry name" value="ProRS_anticodon_zinc"/>
    <property type="match status" value="1"/>
</dbReference>
<dbReference type="CDD" id="cd00778">
    <property type="entry name" value="ProRS_core_arch_euk"/>
    <property type="match status" value="1"/>
</dbReference>
<dbReference type="FunFam" id="3.40.50.800:FF:000005">
    <property type="entry name" value="bifunctional glutamate/proline--tRNA ligase"/>
    <property type="match status" value="1"/>
</dbReference>
<dbReference type="FunFam" id="3.30.930.10:FF:000037">
    <property type="entry name" value="Proline--tRNA ligase"/>
    <property type="match status" value="1"/>
</dbReference>
<dbReference type="Gene3D" id="3.40.50.800">
    <property type="entry name" value="Anticodon-binding domain"/>
    <property type="match status" value="1"/>
</dbReference>
<dbReference type="Gene3D" id="3.30.930.10">
    <property type="entry name" value="Bira Bifunctional Protein, Domain 2"/>
    <property type="match status" value="1"/>
</dbReference>
<dbReference type="Gene3D" id="3.30.110.30">
    <property type="entry name" value="C-terminal domain of ProRS"/>
    <property type="match status" value="1"/>
</dbReference>
<dbReference type="HAMAP" id="MF_01571">
    <property type="entry name" value="Pro_tRNA_synth_type3"/>
    <property type="match status" value="1"/>
</dbReference>
<dbReference type="InterPro" id="IPR002314">
    <property type="entry name" value="aa-tRNA-synt_IIb"/>
</dbReference>
<dbReference type="InterPro" id="IPR006195">
    <property type="entry name" value="aa-tRNA-synth_II"/>
</dbReference>
<dbReference type="InterPro" id="IPR045864">
    <property type="entry name" value="aa-tRNA-synth_II/BPL/LPL"/>
</dbReference>
<dbReference type="InterPro" id="IPR004154">
    <property type="entry name" value="Anticodon-bd"/>
</dbReference>
<dbReference type="InterPro" id="IPR036621">
    <property type="entry name" value="Anticodon-bd_dom_sf"/>
</dbReference>
<dbReference type="InterPro" id="IPR002316">
    <property type="entry name" value="Pro-tRNA-ligase_IIa"/>
</dbReference>
<dbReference type="InterPro" id="IPR004499">
    <property type="entry name" value="Pro-tRNA-ligase_IIa_arc-type"/>
</dbReference>
<dbReference type="InterPro" id="IPR016061">
    <property type="entry name" value="Pro-tRNA_ligase_II_C"/>
</dbReference>
<dbReference type="InterPro" id="IPR017449">
    <property type="entry name" value="Pro-tRNA_synth_II"/>
</dbReference>
<dbReference type="InterPro" id="IPR033721">
    <property type="entry name" value="ProRS_core_arch_euk"/>
</dbReference>
<dbReference type="NCBIfam" id="TIGR00408">
    <property type="entry name" value="proS_fam_I"/>
    <property type="match status" value="1"/>
</dbReference>
<dbReference type="PANTHER" id="PTHR43382:SF2">
    <property type="entry name" value="BIFUNCTIONAL GLUTAMATE_PROLINE--TRNA LIGASE"/>
    <property type="match status" value="1"/>
</dbReference>
<dbReference type="PANTHER" id="PTHR43382">
    <property type="entry name" value="PROLYL-TRNA SYNTHETASE"/>
    <property type="match status" value="1"/>
</dbReference>
<dbReference type="Pfam" id="PF03129">
    <property type="entry name" value="HGTP_anticodon"/>
    <property type="match status" value="1"/>
</dbReference>
<dbReference type="Pfam" id="PF09180">
    <property type="entry name" value="ProRS-C_1"/>
    <property type="match status" value="1"/>
</dbReference>
<dbReference type="Pfam" id="PF00587">
    <property type="entry name" value="tRNA-synt_2b"/>
    <property type="match status" value="1"/>
</dbReference>
<dbReference type="PRINTS" id="PR01046">
    <property type="entry name" value="TRNASYNTHPRO"/>
</dbReference>
<dbReference type="SMART" id="SM00946">
    <property type="entry name" value="ProRS-C_1"/>
    <property type="match status" value="1"/>
</dbReference>
<dbReference type="SUPFAM" id="SSF64586">
    <property type="entry name" value="C-terminal domain of ProRS"/>
    <property type="match status" value="1"/>
</dbReference>
<dbReference type="SUPFAM" id="SSF52954">
    <property type="entry name" value="Class II aaRS ABD-related"/>
    <property type="match status" value="1"/>
</dbReference>
<dbReference type="SUPFAM" id="SSF55681">
    <property type="entry name" value="Class II aaRS and biotin synthetases"/>
    <property type="match status" value="1"/>
</dbReference>
<dbReference type="PROSITE" id="PS50862">
    <property type="entry name" value="AA_TRNA_LIGASE_II"/>
    <property type="match status" value="1"/>
</dbReference>
<feature type="chain" id="PRO_0000249171" description="Proline--tRNA ligase">
    <location>
        <begin position="1"/>
        <end position="480"/>
    </location>
</feature>